<reference key="1">
    <citation type="journal article" date="2008" name="PLoS ONE">
        <title>Genome biology of Actinobacillus pleuropneumoniae JL03, an isolate of serotype 3 prevalent in China.</title>
        <authorList>
            <person name="Xu Z."/>
            <person name="Zhou Y."/>
            <person name="Li L."/>
            <person name="Zhou R."/>
            <person name="Xiao S."/>
            <person name="Wan Y."/>
            <person name="Zhang S."/>
            <person name="Wang K."/>
            <person name="Li W."/>
            <person name="Li L."/>
            <person name="Jin H."/>
            <person name="Kang M."/>
            <person name="Dalai B."/>
            <person name="Li T."/>
            <person name="Liu L."/>
            <person name="Cheng Y."/>
            <person name="Zhang L."/>
            <person name="Xu T."/>
            <person name="Zheng H."/>
            <person name="Pu S."/>
            <person name="Wang B."/>
            <person name="Gu W."/>
            <person name="Zhang X.L."/>
            <person name="Zhu G.-F."/>
            <person name="Wang S."/>
            <person name="Zhao G.-P."/>
            <person name="Chen H."/>
        </authorList>
    </citation>
    <scope>NUCLEOTIDE SEQUENCE [LARGE SCALE GENOMIC DNA]</scope>
    <source>
        <strain>JL03</strain>
    </source>
</reference>
<feature type="chain" id="PRO_0000337303" description="Elongation factor Tu">
    <location>
        <begin position="1"/>
        <end position="394"/>
    </location>
</feature>
<feature type="domain" description="tr-type G">
    <location>
        <begin position="10"/>
        <end position="204"/>
    </location>
</feature>
<feature type="region of interest" description="G1" evidence="1">
    <location>
        <begin position="19"/>
        <end position="26"/>
    </location>
</feature>
<feature type="region of interest" description="G2" evidence="1">
    <location>
        <begin position="60"/>
        <end position="64"/>
    </location>
</feature>
<feature type="region of interest" description="G3" evidence="1">
    <location>
        <begin position="81"/>
        <end position="84"/>
    </location>
</feature>
<feature type="region of interest" description="G4" evidence="1">
    <location>
        <begin position="136"/>
        <end position="139"/>
    </location>
</feature>
<feature type="region of interest" description="G5" evidence="1">
    <location>
        <begin position="174"/>
        <end position="176"/>
    </location>
</feature>
<feature type="binding site" evidence="2">
    <location>
        <begin position="19"/>
        <end position="26"/>
    </location>
    <ligand>
        <name>GTP</name>
        <dbReference type="ChEBI" id="CHEBI:37565"/>
    </ligand>
</feature>
<feature type="binding site" evidence="2">
    <location>
        <position position="26"/>
    </location>
    <ligand>
        <name>Mg(2+)</name>
        <dbReference type="ChEBI" id="CHEBI:18420"/>
    </ligand>
</feature>
<feature type="binding site" evidence="2">
    <location>
        <begin position="81"/>
        <end position="85"/>
    </location>
    <ligand>
        <name>GTP</name>
        <dbReference type="ChEBI" id="CHEBI:37565"/>
    </ligand>
</feature>
<feature type="binding site" evidence="2">
    <location>
        <begin position="136"/>
        <end position="139"/>
    </location>
    <ligand>
        <name>GTP</name>
        <dbReference type="ChEBI" id="CHEBI:37565"/>
    </ligand>
</feature>
<protein>
    <recommendedName>
        <fullName evidence="2">Elongation factor Tu</fullName>
        <shortName evidence="2">EF-Tu</shortName>
        <ecNumber evidence="2">3.6.5.3</ecNumber>
    </recommendedName>
</protein>
<evidence type="ECO:0000250" key="1"/>
<evidence type="ECO:0000255" key="2">
    <source>
        <dbReference type="HAMAP-Rule" id="MF_00118"/>
    </source>
</evidence>
<keyword id="KW-0963">Cytoplasm</keyword>
<keyword id="KW-0251">Elongation factor</keyword>
<keyword id="KW-0342">GTP-binding</keyword>
<keyword id="KW-0378">Hydrolase</keyword>
<keyword id="KW-0460">Magnesium</keyword>
<keyword id="KW-0479">Metal-binding</keyword>
<keyword id="KW-0547">Nucleotide-binding</keyword>
<keyword id="KW-0648">Protein biosynthesis</keyword>
<accession>B0BQZ3</accession>
<gene>
    <name evidence="2" type="primary">tuf1</name>
    <name type="synonym">tufB1</name>
    <name type="ordered locus">APJL_1422</name>
</gene>
<gene>
    <name evidence="2" type="primary">tuf2</name>
    <name type="synonym">tufB2</name>
    <name type="ordered locus">APJL_1538</name>
</gene>
<organism>
    <name type="scientific">Actinobacillus pleuropneumoniae serotype 3 (strain JL03)</name>
    <dbReference type="NCBI Taxonomy" id="434271"/>
    <lineage>
        <taxon>Bacteria</taxon>
        <taxon>Pseudomonadati</taxon>
        <taxon>Pseudomonadota</taxon>
        <taxon>Gammaproteobacteria</taxon>
        <taxon>Pasteurellales</taxon>
        <taxon>Pasteurellaceae</taxon>
        <taxon>Actinobacillus</taxon>
    </lineage>
</organism>
<comment type="function">
    <text evidence="2">GTP hydrolase that promotes the GTP-dependent binding of aminoacyl-tRNA to the A-site of ribosomes during protein biosynthesis.</text>
</comment>
<comment type="catalytic activity">
    <reaction evidence="2">
        <text>GTP + H2O = GDP + phosphate + H(+)</text>
        <dbReference type="Rhea" id="RHEA:19669"/>
        <dbReference type="ChEBI" id="CHEBI:15377"/>
        <dbReference type="ChEBI" id="CHEBI:15378"/>
        <dbReference type="ChEBI" id="CHEBI:37565"/>
        <dbReference type="ChEBI" id="CHEBI:43474"/>
        <dbReference type="ChEBI" id="CHEBI:58189"/>
        <dbReference type="EC" id="3.6.5.3"/>
    </reaction>
    <physiologicalReaction direction="left-to-right" evidence="2">
        <dbReference type="Rhea" id="RHEA:19670"/>
    </physiologicalReaction>
</comment>
<comment type="subunit">
    <text evidence="2">Monomer.</text>
</comment>
<comment type="subcellular location">
    <subcellularLocation>
        <location evidence="2">Cytoplasm</location>
    </subcellularLocation>
</comment>
<comment type="similarity">
    <text evidence="2">Belongs to the TRAFAC class translation factor GTPase superfamily. Classic translation factor GTPase family. EF-Tu/EF-1A subfamily.</text>
</comment>
<name>EFTU_ACTPJ</name>
<proteinExistence type="inferred from homology"/>
<sequence length="394" mass="43467">MSKEKFERTKPHVNVGTIGHVDHGKTTLTAAITTVLSKHFGGAARAFDQIDNAPEEKARGITINTSHVEYDTETRHYAHVDCPGHADYVKNMITGAAQMDGAILVVAATDGPMPQTREHILLGRQVGVPYIIVFLNKCDMVDDEELLELVEMEVRELLSQYDFPGDDTPIVRGSALQALNGVPEWEEKILELAHHLDTYIPEPERAIDKPFLLPIEDVFSISGRGTVVTGRVERGIIKSGEEVEIVGIKETTKTTVTGVEMFRKLLDEGRAGENVGALLRGTKREEIERGQVLAKPGTITPHTDFESEVYVLSKEEGGRHTPFFKGYRPQFYFRTTDVTGTIELPEGVEMVMPGDNIKMTVSLIHPIAMDEGLRFAIREGGRTVGAGVVAKIIK</sequence>
<dbReference type="EC" id="3.6.5.3" evidence="2"/>
<dbReference type="EMBL" id="CP000687">
    <property type="protein sequence ID" value="ABY69978.1"/>
    <property type="molecule type" value="Genomic_DNA"/>
</dbReference>
<dbReference type="EMBL" id="CP000687">
    <property type="protein sequence ID" value="ABY70090.1"/>
    <property type="molecule type" value="Genomic_DNA"/>
</dbReference>
<dbReference type="SMR" id="B0BQZ3"/>
<dbReference type="KEGG" id="apj:APJL_1422"/>
<dbReference type="KEGG" id="apj:APJL_1538"/>
<dbReference type="HOGENOM" id="CLU_007265_0_2_6"/>
<dbReference type="Proteomes" id="UP000008547">
    <property type="component" value="Chromosome"/>
</dbReference>
<dbReference type="GO" id="GO:0005829">
    <property type="term" value="C:cytosol"/>
    <property type="evidence" value="ECO:0007669"/>
    <property type="project" value="TreeGrafter"/>
</dbReference>
<dbReference type="GO" id="GO:0005525">
    <property type="term" value="F:GTP binding"/>
    <property type="evidence" value="ECO:0007669"/>
    <property type="project" value="UniProtKB-UniRule"/>
</dbReference>
<dbReference type="GO" id="GO:0003924">
    <property type="term" value="F:GTPase activity"/>
    <property type="evidence" value="ECO:0007669"/>
    <property type="project" value="InterPro"/>
</dbReference>
<dbReference type="GO" id="GO:0097216">
    <property type="term" value="F:guanosine tetraphosphate binding"/>
    <property type="evidence" value="ECO:0007669"/>
    <property type="project" value="UniProtKB-ARBA"/>
</dbReference>
<dbReference type="GO" id="GO:0003746">
    <property type="term" value="F:translation elongation factor activity"/>
    <property type="evidence" value="ECO:0007669"/>
    <property type="project" value="UniProtKB-UniRule"/>
</dbReference>
<dbReference type="CDD" id="cd01884">
    <property type="entry name" value="EF_Tu"/>
    <property type="match status" value="1"/>
</dbReference>
<dbReference type="CDD" id="cd03697">
    <property type="entry name" value="EFTU_II"/>
    <property type="match status" value="1"/>
</dbReference>
<dbReference type="CDD" id="cd03707">
    <property type="entry name" value="EFTU_III"/>
    <property type="match status" value="1"/>
</dbReference>
<dbReference type="FunFam" id="2.40.30.10:FF:000001">
    <property type="entry name" value="Elongation factor Tu"/>
    <property type="match status" value="1"/>
</dbReference>
<dbReference type="FunFam" id="3.40.50.300:FF:000003">
    <property type="entry name" value="Elongation factor Tu"/>
    <property type="match status" value="1"/>
</dbReference>
<dbReference type="Gene3D" id="3.40.50.300">
    <property type="entry name" value="P-loop containing nucleotide triphosphate hydrolases"/>
    <property type="match status" value="1"/>
</dbReference>
<dbReference type="Gene3D" id="2.40.30.10">
    <property type="entry name" value="Translation factors"/>
    <property type="match status" value="2"/>
</dbReference>
<dbReference type="HAMAP" id="MF_00118_B">
    <property type="entry name" value="EF_Tu_B"/>
    <property type="match status" value="1"/>
</dbReference>
<dbReference type="InterPro" id="IPR041709">
    <property type="entry name" value="EF-Tu_GTP-bd"/>
</dbReference>
<dbReference type="InterPro" id="IPR050055">
    <property type="entry name" value="EF-Tu_GTPase"/>
</dbReference>
<dbReference type="InterPro" id="IPR004161">
    <property type="entry name" value="EFTu-like_2"/>
</dbReference>
<dbReference type="InterPro" id="IPR033720">
    <property type="entry name" value="EFTU_2"/>
</dbReference>
<dbReference type="InterPro" id="IPR031157">
    <property type="entry name" value="G_TR_CS"/>
</dbReference>
<dbReference type="InterPro" id="IPR027417">
    <property type="entry name" value="P-loop_NTPase"/>
</dbReference>
<dbReference type="InterPro" id="IPR005225">
    <property type="entry name" value="Small_GTP-bd"/>
</dbReference>
<dbReference type="InterPro" id="IPR000795">
    <property type="entry name" value="T_Tr_GTP-bd_dom"/>
</dbReference>
<dbReference type="InterPro" id="IPR009000">
    <property type="entry name" value="Transl_B-barrel_sf"/>
</dbReference>
<dbReference type="InterPro" id="IPR009001">
    <property type="entry name" value="Transl_elong_EF1A/Init_IF2_C"/>
</dbReference>
<dbReference type="InterPro" id="IPR004541">
    <property type="entry name" value="Transl_elong_EFTu/EF1A_bac/org"/>
</dbReference>
<dbReference type="InterPro" id="IPR004160">
    <property type="entry name" value="Transl_elong_EFTu/EF1A_C"/>
</dbReference>
<dbReference type="NCBIfam" id="TIGR00485">
    <property type="entry name" value="EF-Tu"/>
    <property type="match status" value="1"/>
</dbReference>
<dbReference type="NCBIfam" id="NF000766">
    <property type="entry name" value="PRK00049.1"/>
    <property type="match status" value="1"/>
</dbReference>
<dbReference type="NCBIfam" id="NF009372">
    <property type="entry name" value="PRK12735.1"/>
    <property type="match status" value="1"/>
</dbReference>
<dbReference type="NCBIfam" id="NF009373">
    <property type="entry name" value="PRK12736.1"/>
    <property type="match status" value="1"/>
</dbReference>
<dbReference type="NCBIfam" id="TIGR00231">
    <property type="entry name" value="small_GTP"/>
    <property type="match status" value="1"/>
</dbReference>
<dbReference type="PANTHER" id="PTHR43721:SF22">
    <property type="entry name" value="ELONGATION FACTOR TU, MITOCHONDRIAL"/>
    <property type="match status" value="1"/>
</dbReference>
<dbReference type="PANTHER" id="PTHR43721">
    <property type="entry name" value="ELONGATION FACTOR TU-RELATED"/>
    <property type="match status" value="1"/>
</dbReference>
<dbReference type="Pfam" id="PF00009">
    <property type="entry name" value="GTP_EFTU"/>
    <property type="match status" value="1"/>
</dbReference>
<dbReference type="Pfam" id="PF03144">
    <property type="entry name" value="GTP_EFTU_D2"/>
    <property type="match status" value="1"/>
</dbReference>
<dbReference type="Pfam" id="PF03143">
    <property type="entry name" value="GTP_EFTU_D3"/>
    <property type="match status" value="1"/>
</dbReference>
<dbReference type="PRINTS" id="PR00315">
    <property type="entry name" value="ELONGATNFCT"/>
</dbReference>
<dbReference type="SUPFAM" id="SSF50465">
    <property type="entry name" value="EF-Tu/eEF-1alpha/eIF2-gamma C-terminal domain"/>
    <property type="match status" value="1"/>
</dbReference>
<dbReference type="SUPFAM" id="SSF52540">
    <property type="entry name" value="P-loop containing nucleoside triphosphate hydrolases"/>
    <property type="match status" value="1"/>
</dbReference>
<dbReference type="SUPFAM" id="SSF50447">
    <property type="entry name" value="Translation proteins"/>
    <property type="match status" value="1"/>
</dbReference>
<dbReference type="PROSITE" id="PS00301">
    <property type="entry name" value="G_TR_1"/>
    <property type="match status" value="1"/>
</dbReference>
<dbReference type="PROSITE" id="PS51722">
    <property type="entry name" value="G_TR_2"/>
    <property type="match status" value="1"/>
</dbReference>